<organismHost>
    <name type="scientific">Bos taurus</name>
    <name type="common">Bovine</name>
    <dbReference type="NCBI Taxonomy" id="9913"/>
</organismHost>
<proteinExistence type="predicted"/>
<name>VE8_BPV6</name>
<protein>
    <recommendedName>
        <fullName>Uncharacterized protein E8</fullName>
    </recommendedName>
</protein>
<sequence>MCCINYYSIEYGCTVSGAYKKQTKLVSAWSLGSIIMRLTLIFWLLLLWCGFHLAALCIAIILFLLLLSAIDELNGWD</sequence>
<dbReference type="EMBL" id="AJ620208">
    <property type="protein sequence ID" value="CAF05685.1"/>
    <property type="molecule type" value="Genomic_DNA"/>
</dbReference>
<dbReference type="SMR" id="Q705F6"/>
<dbReference type="Proteomes" id="UP000117755">
    <property type="component" value="Genome"/>
</dbReference>
<keyword id="KW-0244">Early protein</keyword>
<accession>Q705F6</accession>
<feature type="chain" id="PRO_0000133474" description="Uncharacterized protein E8">
    <location>
        <begin position="1"/>
        <end position="77"/>
    </location>
</feature>
<organism>
    <name type="scientific">Bos taurus papillomavirus 6</name>
    <name type="common">Bovine papillomavirus 6</name>
    <dbReference type="NCBI Taxonomy" id="10563"/>
    <lineage>
        <taxon>Viruses</taxon>
        <taxon>Monodnaviria</taxon>
        <taxon>Shotokuvirae</taxon>
        <taxon>Cossaviricota</taxon>
        <taxon>Papovaviricetes</taxon>
        <taxon>Zurhausenvirales</taxon>
        <taxon>Papillomaviridae</taxon>
        <taxon>Firstpapillomavirinae</taxon>
        <taxon>Xipapillomavirus</taxon>
        <taxon>Xipapillomavirus 1</taxon>
    </lineage>
</organism>
<reference key="1">
    <citation type="submission" date="2004-01" db="EMBL/GenBank/DDBJ databases">
        <title>Sequencing of the complete genomes of BPV 3, BPV 5 and BPV 6.</title>
        <authorList>
            <person name="Delius H."/>
            <person name="de Villiers E.M."/>
        </authorList>
    </citation>
    <scope>NUCLEOTIDE SEQUENCE [GENOMIC DNA]</scope>
</reference>